<protein>
    <recommendedName>
        <fullName evidence="1">Pyrrolidone-carboxylate peptidase</fullName>
        <ecNumber evidence="1">3.4.19.3</ecNumber>
    </recommendedName>
    <alternativeName>
        <fullName evidence="1">5-oxoprolyl-peptidase</fullName>
    </alternativeName>
    <alternativeName>
        <fullName evidence="1">Pyroglutamyl-peptidase I</fullName>
        <shortName evidence="1">PGP-I</shortName>
        <shortName evidence="1">Pyrase</shortName>
    </alternativeName>
</protein>
<feature type="chain" id="PRO_0000184718" description="Pyrrolidone-carboxylate peptidase">
    <location>
        <begin position="1"/>
        <end position="215"/>
    </location>
</feature>
<feature type="active site" evidence="1">
    <location>
        <position position="80"/>
    </location>
</feature>
<feature type="active site" evidence="1">
    <location>
        <position position="143"/>
    </location>
</feature>
<feature type="active site" evidence="1">
    <location>
        <position position="167"/>
    </location>
</feature>
<name>PCP_PECAS</name>
<reference key="1">
    <citation type="journal article" date="2004" name="Proc. Natl. Acad. Sci. U.S.A.">
        <title>Genome sequence of the enterobacterial phytopathogen Erwinia carotovora subsp. atroseptica and characterization of virulence factors.</title>
        <authorList>
            <person name="Bell K.S."/>
            <person name="Sebaihia M."/>
            <person name="Pritchard L."/>
            <person name="Holden M.T.G."/>
            <person name="Hyman L.J."/>
            <person name="Holeva M.C."/>
            <person name="Thomson N.R."/>
            <person name="Bentley S.D."/>
            <person name="Churcher L.J.C."/>
            <person name="Mungall K."/>
            <person name="Atkin R."/>
            <person name="Bason N."/>
            <person name="Brooks K."/>
            <person name="Chillingworth T."/>
            <person name="Clark K."/>
            <person name="Doggett J."/>
            <person name="Fraser A."/>
            <person name="Hance Z."/>
            <person name="Hauser H."/>
            <person name="Jagels K."/>
            <person name="Moule S."/>
            <person name="Norbertczak H."/>
            <person name="Ormond D."/>
            <person name="Price C."/>
            <person name="Quail M.A."/>
            <person name="Sanders M."/>
            <person name="Walker D."/>
            <person name="Whitehead S."/>
            <person name="Salmond G.P.C."/>
            <person name="Birch P.R.J."/>
            <person name="Parkhill J."/>
            <person name="Toth I.K."/>
        </authorList>
    </citation>
    <scope>NUCLEOTIDE SEQUENCE [LARGE SCALE GENOMIC DNA]</scope>
    <source>
        <strain>SCRI 1043 / ATCC BAA-672</strain>
    </source>
</reference>
<dbReference type="EC" id="3.4.19.3" evidence="1"/>
<dbReference type="EMBL" id="BX950851">
    <property type="protein sequence ID" value="CAG74264.1"/>
    <property type="molecule type" value="Genomic_DNA"/>
</dbReference>
<dbReference type="RefSeq" id="WP_011092939.1">
    <property type="nucleotide sequence ID" value="NC_004547.2"/>
</dbReference>
<dbReference type="SMR" id="Q6D7H1"/>
<dbReference type="STRING" id="218491.ECA1354"/>
<dbReference type="MEROPS" id="C15.001"/>
<dbReference type="KEGG" id="eca:ECA1354"/>
<dbReference type="PATRIC" id="fig|218491.5.peg.1385"/>
<dbReference type="eggNOG" id="COG2039">
    <property type="taxonomic scope" value="Bacteria"/>
</dbReference>
<dbReference type="HOGENOM" id="CLU_043960_4_0_6"/>
<dbReference type="OrthoDB" id="9779738at2"/>
<dbReference type="Proteomes" id="UP000007966">
    <property type="component" value="Chromosome"/>
</dbReference>
<dbReference type="GO" id="GO:0005829">
    <property type="term" value="C:cytosol"/>
    <property type="evidence" value="ECO:0007669"/>
    <property type="project" value="InterPro"/>
</dbReference>
<dbReference type="GO" id="GO:0016920">
    <property type="term" value="F:pyroglutamyl-peptidase activity"/>
    <property type="evidence" value="ECO:0007669"/>
    <property type="project" value="UniProtKB-UniRule"/>
</dbReference>
<dbReference type="GO" id="GO:0006508">
    <property type="term" value="P:proteolysis"/>
    <property type="evidence" value="ECO:0007669"/>
    <property type="project" value="UniProtKB-KW"/>
</dbReference>
<dbReference type="CDD" id="cd00501">
    <property type="entry name" value="Peptidase_C15"/>
    <property type="match status" value="1"/>
</dbReference>
<dbReference type="FunFam" id="3.40.630.20:FF:000001">
    <property type="entry name" value="Pyrrolidone-carboxylate peptidase"/>
    <property type="match status" value="1"/>
</dbReference>
<dbReference type="Gene3D" id="3.40.630.20">
    <property type="entry name" value="Peptidase C15, pyroglutamyl peptidase I-like"/>
    <property type="match status" value="1"/>
</dbReference>
<dbReference type="HAMAP" id="MF_00417">
    <property type="entry name" value="Pyrrolid_peptidase"/>
    <property type="match status" value="1"/>
</dbReference>
<dbReference type="InterPro" id="IPR000816">
    <property type="entry name" value="Peptidase_C15"/>
</dbReference>
<dbReference type="InterPro" id="IPR016125">
    <property type="entry name" value="Peptidase_C15-like"/>
</dbReference>
<dbReference type="InterPro" id="IPR036440">
    <property type="entry name" value="Peptidase_C15-like_sf"/>
</dbReference>
<dbReference type="InterPro" id="IPR029762">
    <property type="entry name" value="PGP-I_bact-type"/>
</dbReference>
<dbReference type="InterPro" id="IPR033694">
    <property type="entry name" value="PGPEP1_Cys_AS"/>
</dbReference>
<dbReference type="InterPro" id="IPR033693">
    <property type="entry name" value="PGPEP1_Glu_AS"/>
</dbReference>
<dbReference type="NCBIfam" id="NF009676">
    <property type="entry name" value="PRK13197.1"/>
    <property type="match status" value="1"/>
</dbReference>
<dbReference type="NCBIfam" id="TIGR00504">
    <property type="entry name" value="pyro_pdase"/>
    <property type="match status" value="1"/>
</dbReference>
<dbReference type="PANTHER" id="PTHR23402">
    <property type="entry name" value="PROTEASE FAMILY C15 PYROGLUTAMYL-PEPTIDASE I-RELATED"/>
    <property type="match status" value="1"/>
</dbReference>
<dbReference type="PANTHER" id="PTHR23402:SF1">
    <property type="entry name" value="PYROGLUTAMYL-PEPTIDASE I"/>
    <property type="match status" value="1"/>
</dbReference>
<dbReference type="Pfam" id="PF01470">
    <property type="entry name" value="Peptidase_C15"/>
    <property type="match status" value="1"/>
</dbReference>
<dbReference type="PIRSF" id="PIRSF015592">
    <property type="entry name" value="Prld-crbxl_pptds"/>
    <property type="match status" value="1"/>
</dbReference>
<dbReference type="PRINTS" id="PR00706">
    <property type="entry name" value="PYROGLUPTASE"/>
</dbReference>
<dbReference type="SUPFAM" id="SSF53182">
    <property type="entry name" value="Pyrrolidone carboxyl peptidase (pyroglutamate aminopeptidase)"/>
    <property type="match status" value="1"/>
</dbReference>
<dbReference type="PROSITE" id="PS01334">
    <property type="entry name" value="PYRASE_CYS"/>
    <property type="match status" value="1"/>
</dbReference>
<dbReference type="PROSITE" id="PS01333">
    <property type="entry name" value="PYRASE_GLU"/>
    <property type="match status" value="1"/>
</dbReference>
<accession>Q6D7H1</accession>
<proteinExistence type="inferred from homology"/>
<comment type="function">
    <text evidence="1">Removes 5-oxoproline from various penultimate amino acid residues except L-proline.</text>
</comment>
<comment type="catalytic activity">
    <reaction evidence="1">
        <text>Release of an N-terminal pyroglutamyl group from a polypeptide, the second amino acid generally not being Pro.</text>
        <dbReference type="EC" id="3.4.19.3"/>
    </reaction>
</comment>
<comment type="subunit">
    <text evidence="1">Homotetramer.</text>
</comment>
<comment type="subcellular location">
    <subcellularLocation>
        <location evidence="1">Cytoplasm</location>
    </subcellularLocation>
</comment>
<comment type="similarity">
    <text evidence="1">Belongs to the peptidase C15 family.</text>
</comment>
<sequence length="215" mass="23095">MKTVLITAFEPFEGEAINPSWEAVKDLHQREVGGVRVVACRLSCVFDLSLDQLYRAIAEWQPEVVIAVGQAGGRADISVERVAININDARIADNRGNQPIDTPVVEKGPAAYFSTLPVKALVQALHVAGIPASVSQTAGTFVCNHVMYGLLHQLHQQGDVVRGGFVHIPYSPEQAARHPGEPSMPTPLVTAALEVMIKQLLVQQVDVAITGGALH</sequence>
<evidence type="ECO:0000255" key="1">
    <source>
        <dbReference type="HAMAP-Rule" id="MF_00417"/>
    </source>
</evidence>
<organism>
    <name type="scientific">Pectobacterium atrosepticum (strain SCRI 1043 / ATCC BAA-672)</name>
    <name type="common">Erwinia carotovora subsp. atroseptica</name>
    <dbReference type="NCBI Taxonomy" id="218491"/>
    <lineage>
        <taxon>Bacteria</taxon>
        <taxon>Pseudomonadati</taxon>
        <taxon>Pseudomonadota</taxon>
        <taxon>Gammaproteobacteria</taxon>
        <taxon>Enterobacterales</taxon>
        <taxon>Pectobacteriaceae</taxon>
        <taxon>Pectobacterium</taxon>
    </lineage>
</organism>
<keyword id="KW-0963">Cytoplasm</keyword>
<keyword id="KW-0378">Hydrolase</keyword>
<keyword id="KW-0645">Protease</keyword>
<keyword id="KW-1185">Reference proteome</keyword>
<keyword id="KW-0788">Thiol protease</keyword>
<gene>
    <name evidence="1" type="primary">pcp</name>
    <name type="ordered locus">ECA1354</name>
</gene>